<keyword id="KW-1003">Cell membrane</keyword>
<keyword id="KW-0963">Cytoplasm</keyword>
<keyword id="KW-0344">Guanine-nucleotide releasing factor</keyword>
<keyword id="KW-0472">Membrane</keyword>
<keyword id="KW-1185">Reference proteome</keyword>
<reference key="1">
    <citation type="journal article" date="2009" name="Genome Res.">
        <title>Comparative genomics of protoploid Saccharomycetaceae.</title>
        <authorList>
            <consortium name="The Genolevures Consortium"/>
            <person name="Souciet J.-L."/>
            <person name="Dujon B."/>
            <person name="Gaillardin C."/>
            <person name="Johnston M."/>
            <person name="Baret P.V."/>
            <person name="Cliften P."/>
            <person name="Sherman D.J."/>
            <person name="Weissenbach J."/>
            <person name="Westhof E."/>
            <person name="Wincker P."/>
            <person name="Jubin C."/>
            <person name="Poulain J."/>
            <person name="Barbe V."/>
            <person name="Segurens B."/>
            <person name="Artiguenave F."/>
            <person name="Anthouard V."/>
            <person name="Vacherie B."/>
            <person name="Val M.-E."/>
            <person name="Fulton R.S."/>
            <person name="Minx P."/>
            <person name="Wilson R."/>
            <person name="Durrens P."/>
            <person name="Jean G."/>
            <person name="Marck C."/>
            <person name="Martin T."/>
            <person name="Nikolski M."/>
            <person name="Rolland T."/>
            <person name="Seret M.-L."/>
            <person name="Casaregola S."/>
            <person name="Despons L."/>
            <person name="Fairhead C."/>
            <person name="Fischer G."/>
            <person name="Lafontaine I."/>
            <person name="Leh V."/>
            <person name="Lemaire M."/>
            <person name="de Montigny J."/>
            <person name="Neuveglise C."/>
            <person name="Thierry A."/>
            <person name="Blanc-Lenfle I."/>
            <person name="Bleykasten C."/>
            <person name="Diffels J."/>
            <person name="Fritsch E."/>
            <person name="Frangeul L."/>
            <person name="Goeffon A."/>
            <person name="Jauniaux N."/>
            <person name="Kachouri-Lafond R."/>
            <person name="Payen C."/>
            <person name="Potier S."/>
            <person name="Pribylova L."/>
            <person name="Ozanne C."/>
            <person name="Richard G.-F."/>
            <person name="Sacerdot C."/>
            <person name="Straub M.-L."/>
            <person name="Talla E."/>
        </authorList>
    </citation>
    <scope>NUCLEOTIDE SEQUENCE [LARGE SCALE GENOMIC DNA]</scope>
    <source>
        <strain>ATCC 2623 / CBS 732 / BCRC 21506 / NBRC 1130 / NCYC 568 / NRRL Y-229</strain>
    </source>
</reference>
<feature type="chain" id="PRO_0000404230" description="Guanine-nucleotide exchange factor YEL1">
    <location>
        <begin position="1"/>
        <end position="833"/>
    </location>
</feature>
<feature type="domain" description="SEC7" evidence="2">
    <location>
        <begin position="185"/>
        <end position="410"/>
    </location>
</feature>
<feature type="domain" description="PH">
    <location>
        <begin position="548"/>
        <end position="696"/>
    </location>
</feature>
<feature type="region of interest" description="Disordered" evidence="3">
    <location>
        <begin position="1"/>
        <end position="51"/>
    </location>
</feature>
<feature type="region of interest" description="Disordered" evidence="3">
    <location>
        <begin position="152"/>
        <end position="194"/>
    </location>
</feature>
<feature type="region of interest" description="Disordered" evidence="3">
    <location>
        <begin position="215"/>
        <end position="246"/>
    </location>
</feature>
<feature type="region of interest" description="Disordered" evidence="3">
    <location>
        <begin position="420"/>
        <end position="483"/>
    </location>
</feature>
<feature type="compositionally biased region" description="Polar residues" evidence="3">
    <location>
        <begin position="1"/>
        <end position="15"/>
    </location>
</feature>
<feature type="compositionally biased region" description="Acidic residues" evidence="3">
    <location>
        <begin position="20"/>
        <end position="34"/>
    </location>
</feature>
<feature type="compositionally biased region" description="Basic and acidic residues" evidence="3">
    <location>
        <begin position="172"/>
        <end position="194"/>
    </location>
</feature>
<feature type="compositionally biased region" description="Low complexity" evidence="3">
    <location>
        <begin position="230"/>
        <end position="240"/>
    </location>
</feature>
<feature type="compositionally biased region" description="Basic and acidic residues" evidence="3">
    <location>
        <begin position="420"/>
        <end position="435"/>
    </location>
</feature>
<comment type="function">
    <text evidence="1">Guanine nucleotide exchange factor for ARF3 required for localization of ARF3 to the bud neck and tip and involved in actin patch polarization.</text>
</comment>
<comment type="subcellular location">
    <subcellularLocation>
        <location evidence="1">Cytoplasm</location>
    </subcellularLocation>
    <subcellularLocation>
        <location evidence="1">Cell membrane</location>
        <topology evidence="1">Peripheral membrane protein</topology>
    </subcellularLocation>
    <subcellularLocation>
        <location evidence="1">Bud neck</location>
    </subcellularLocation>
    <subcellularLocation>
        <location evidence="1">Bud tip</location>
    </subcellularLocation>
    <text evidence="1">Localizes at the cell membrane only at the bud neck and bud tip and this localization is ARF3-dependent.</text>
</comment>
<comment type="similarity">
    <text evidence="4">Belongs to the YEL1 family.</text>
</comment>
<dbReference type="EMBL" id="CU928174">
    <property type="protein sequence ID" value="CAR26160.1"/>
    <property type="molecule type" value="Genomic_DNA"/>
</dbReference>
<dbReference type="RefSeq" id="XP_002495093.1">
    <property type="nucleotide sequence ID" value="XM_002495048.1"/>
</dbReference>
<dbReference type="FunCoup" id="C5DQU9">
    <property type="interactions" value="24"/>
</dbReference>
<dbReference type="STRING" id="559307.C5DQU9"/>
<dbReference type="GeneID" id="8202233"/>
<dbReference type="KEGG" id="zro:ZYRO0B03168g"/>
<dbReference type="HOGENOM" id="CLU_017717_0_0_1"/>
<dbReference type="InParanoid" id="C5DQU9"/>
<dbReference type="Proteomes" id="UP000008536">
    <property type="component" value="Chromosome B"/>
</dbReference>
<dbReference type="GO" id="GO:0005935">
    <property type="term" value="C:cellular bud neck"/>
    <property type="evidence" value="ECO:0007669"/>
    <property type="project" value="UniProtKB-SubCell"/>
</dbReference>
<dbReference type="GO" id="GO:0005934">
    <property type="term" value="C:cellular bud tip"/>
    <property type="evidence" value="ECO:0007669"/>
    <property type="project" value="UniProtKB-SubCell"/>
</dbReference>
<dbReference type="GO" id="GO:0005737">
    <property type="term" value="C:cytoplasm"/>
    <property type="evidence" value="ECO:0007669"/>
    <property type="project" value="UniProtKB-SubCell"/>
</dbReference>
<dbReference type="GO" id="GO:0005886">
    <property type="term" value="C:plasma membrane"/>
    <property type="evidence" value="ECO:0007669"/>
    <property type="project" value="UniProtKB-SubCell"/>
</dbReference>
<dbReference type="GO" id="GO:0005085">
    <property type="term" value="F:guanyl-nucleotide exchange factor activity"/>
    <property type="evidence" value="ECO:0007669"/>
    <property type="project" value="UniProtKB-KW"/>
</dbReference>
<dbReference type="GO" id="GO:0032012">
    <property type="term" value="P:regulation of ARF protein signal transduction"/>
    <property type="evidence" value="ECO:0007669"/>
    <property type="project" value="InterPro"/>
</dbReference>
<dbReference type="Gene3D" id="1.10.1000.11">
    <property type="entry name" value="Arf Nucleotide-binding Site Opener,domain 2"/>
    <property type="match status" value="1"/>
</dbReference>
<dbReference type="InterPro" id="IPR056468">
    <property type="entry name" value="PH_GEF_YEL1"/>
</dbReference>
<dbReference type="InterPro" id="IPR023394">
    <property type="entry name" value="Sec7_C_sf"/>
</dbReference>
<dbReference type="InterPro" id="IPR000904">
    <property type="entry name" value="Sec7_dom"/>
</dbReference>
<dbReference type="InterPro" id="IPR035999">
    <property type="entry name" value="Sec7_dom_sf"/>
</dbReference>
<dbReference type="Pfam" id="PF23633">
    <property type="entry name" value="PH_GEF_YEL1"/>
    <property type="match status" value="1"/>
</dbReference>
<dbReference type="Pfam" id="PF01369">
    <property type="entry name" value="Sec7"/>
    <property type="match status" value="1"/>
</dbReference>
<dbReference type="SMART" id="SM00222">
    <property type="entry name" value="Sec7"/>
    <property type="match status" value="1"/>
</dbReference>
<dbReference type="SUPFAM" id="SSF48425">
    <property type="entry name" value="Sec7 domain"/>
    <property type="match status" value="1"/>
</dbReference>
<dbReference type="PROSITE" id="PS50190">
    <property type="entry name" value="SEC7"/>
    <property type="match status" value="1"/>
</dbReference>
<accession>C5DQU9</accession>
<protein>
    <recommendedName>
        <fullName>Guanine-nucleotide exchange factor YEL1</fullName>
    </recommendedName>
</protein>
<name>YEL1_ZYGRC</name>
<gene>
    <name type="primary">YEL1</name>
    <name type="ordered locus">ZYRO0B03168g</name>
</gene>
<sequence length="833" mass="95684">MNNLSSQNIGTSLDFQESPGEFEEEEEREEDDSSEISSLPPLTQVATASPRMIVSPKMQNIHLIIQNEDNDSSEVNTPHEDWHANLGLGIQSQPLRNERNVEEHYRTRAKRQTILWAENQAEEDTMTQERVRAEAELQVKFEGARAKAEARAEAEASSRAGLSTGVNGANRTVEDTKSTGEQDEMTRKTAERERRLRAEKERLLIEEDARKKAVQVKLEKEKEEEEEGKAAAGRTTAAPETPEDQEAQRIAVEIVQGIYKKISHTEYANFLGTKENHRILKRFIILLEPLPNSLVLSLYKLVTRIYFIAEAQAIDRILEELSIRWTTTNPATHWGSHYNLCHIVLFSLLILNSDLHNAENNQPKFSKEEFTENTLFAVEKESSKSNFDLAQHEPGIREELGVYYEALKYMSLPLLKKDENKTNVRDSRDSKDTRIRIRRRNSKMSTRSQLNNSTENSSSDDDTSVISSSSPSARREPHYTSNWKFHHNKPLPRLYRKEPLDEVFVFSNGTSWCVDSGIKMNERDLASSSNNKSTAQRTTRSRIPSSAGGIFRWITRSKSKSLLHGNKSPVAFFDGNTKWINVRCRVCEGRIYVFKHYPPSMGPQNSMQDLDGMKKASDVYFVCSLYESLATLVQDNVVVNNNHEPSRRGDLDQRGNFTVIIPASLHRKKTLLEFQTSNVEEAQRFVQCVNFWAARLTPVPTAQFEIVSNEENGWSPRVLSGDLPIETLETLYLSDWRPLLSISHLYSEQENSTEETNMVDKIEVLESFAEYLQRTIDSHNTVKPLMISRWRRTRNFERAMDNWNKKYLYLNELNERTSVYLNALQLAQRSVKH</sequence>
<proteinExistence type="inferred from homology"/>
<evidence type="ECO:0000250" key="1"/>
<evidence type="ECO:0000255" key="2">
    <source>
        <dbReference type="PROSITE-ProRule" id="PRU00189"/>
    </source>
</evidence>
<evidence type="ECO:0000256" key="3">
    <source>
        <dbReference type="SAM" id="MobiDB-lite"/>
    </source>
</evidence>
<evidence type="ECO:0000305" key="4"/>
<organism>
    <name type="scientific">Zygosaccharomyces rouxii (strain ATCC 2623 / CBS 732 / NBRC 1130 / NCYC 568 / NRRL Y-229)</name>
    <dbReference type="NCBI Taxonomy" id="559307"/>
    <lineage>
        <taxon>Eukaryota</taxon>
        <taxon>Fungi</taxon>
        <taxon>Dikarya</taxon>
        <taxon>Ascomycota</taxon>
        <taxon>Saccharomycotina</taxon>
        <taxon>Saccharomycetes</taxon>
        <taxon>Saccharomycetales</taxon>
        <taxon>Saccharomycetaceae</taxon>
        <taxon>Zygosaccharomyces</taxon>
    </lineage>
</organism>